<feature type="chain" id="PRO_0000288135" description="tRNA (guanine-N(7)-)-methyltransferase">
    <location>
        <begin position="1"/>
        <end position="224"/>
    </location>
</feature>
<feature type="active site" evidence="1">
    <location>
        <position position="129"/>
    </location>
</feature>
<feature type="binding site" evidence="2">
    <location>
        <position position="54"/>
    </location>
    <ligand>
        <name>S-adenosyl-L-methionine</name>
        <dbReference type="ChEBI" id="CHEBI:59789"/>
    </ligand>
</feature>
<feature type="binding site" evidence="2">
    <location>
        <position position="79"/>
    </location>
    <ligand>
        <name>S-adenosyl-L-methionine</name>
        <dbReference type="ChEBI" id="CHEBI:59789"/>
    </ligand>
</feature>
<feature type="binding site" evidence="2">
    <location>
        <position position="106"/>
    </location>
    <ligand>
        <name>S-adenosyl-L-methionine</name>
        <dbReference type="ChEBI" id="CHEBI:59789"/>
    </ligand>
</feature>
<feature type="binding site" evidence="2">
    <location>
        <position position="129"/>
    </location>
    <ligand>
        <name>S-adenosyl-L-methionine</name>
        <dbReference type="ChEBI" id="CHEBI:59789"/>
    </ligand>
</feature>
<feature type="binding site" evidence="2">
    <location>
        <position position="133"/>
    </location>
    <ligand>
        <name>substrate</name>
    </ligand>
</feature>
<feature type="binding site" evidence="2">
    <location>
        <position position="165"/>
    </location>
    <ligand>
        <name>substrate</name>
    </ligand>
</feature>
<comment type="function">
    <text evidence="2">Catalyzes the formation of N(7)-methylguanine at position 46 (m7G46) in tRNA.</text>
</comment>
<comment type="catalytic activity">
    <reaction evidence="2">
        <text>guanosine(46) in tRNA + S-adenosyl-L-methionine = N(7)-methylguanosine(46) in tRNA + S-adenosyl-L-homocysteine</text>
        <dbReference type="Rhea" id="RHEA:42708"/>
        <dbReference type="Rhea" id="RHEA-COMP:10188"/>
        <dbReference type="Rhea" id="RHEA-COMP:10189"/>
        <dbReference type="ChEBI" id="CHEBI:57856"/>
        <dbReference type="ChEBI" id="CHEBI:59789"/>
        <dbReference type="ChEBI" id="CHEBI:74269"/>
        <dbReference type="ChEBI" id="CHEBI:74480"/>
        <dbReference type="EC" id="2.1.1.33"/>
    </reaction>
</comment>
<comment type="pathway">
    <text evidence="2">tRNA modification; N(7)-methylguanine-tRNA biosynthesis.</text>
</comment>
<comment type="similarity">
    <text evidence="2">Belongs to the class I-like SAM-binding methyltransferase superfamily. TrmB family.</text>
</comment>
<gene>
    <name evidence="2" type="primary">trmB</name>
    <name type="ordered locus">CF0239</name>
</gene>
<name>TRMB_CHLFF</name>
<keyword id="KW-0489">Methyltransferase</keyword>
<keyword id="KW-0949">S-adenosyl-L-methionine</keyword>
<keyword id="KW-0808">Transferase</keyword>
<keyword id="KW-0819">tRNA processing</keyword>
<evidence type="ECO:0000250" key="1"/>
<evidence type="ECO:0000255" key="2">
    <source>
        <dbReference type="HAMAP-Rule" id="MF_01057"/>
    </source>
</evidence>
<sequence length="224" mass="26838">MKPQDLKVPFFWEERSTKIKDNVLYVPEHYFKHHQFIMPSWEEFFGNDNPISCELCSGNGDWVVAQAKETPEVNWIAVEKRFDRVRKIWSKMHNCRVTNLRIVCGDAQTFFLHYLGEAVVQRIIVNFPDPWPKSRHRKHRLFQDEFLNNVVRVLTEPGILILATDDKNYLLQAIQIMRQYLSPTMEDPYYCEVENYGNSWFETLWRSKGREIFYTEFVKKLGYS</sequence>
<dbReference type="EC" id="2.1.1.33" evidence="2"/>
<dbReference type="EMBL" id="AP006861">
    <property type="protein sequence ID" value="BAE81011.1"/>
    <property type="molecule type" value="Genomic_DNA"/>
</dbReference>
<dbReference type="RefSeq" id="WP_011457793.1">
    <property type="nucleotide sequence ID" value="NC_007899.1"/>
</dbReference>
<dbReference type="SMR" id="Q255M7"/>
<dbReference type="STRING" id="264202.CF0239"/>
<dbReference type="KEGG" id="cfe:CF0239"/>
<dbReference type="eggNOG" id="COG0220">
    <property type="taxonomic scope" value="Bacteria"/>
</dbReference>
<dbReference type="HOGENOM" id="CLU_050910_2_0_0"/>
<dbReference type="OrthoDB" id="9802090at2"/>
<dbReference type="UniPathway" id="UPA00989"/>
<dbReference type="Proteomes" id="UP000001260">
    <property type="component" value="Chromosome"/>
</dbReference>
<dbReference type="GO" id="GO:0043527">
    <property type="term" value="C:tRNA methyltransferase complex"/>
    <property type="evidence" value="ECO:0007669"/>
    <property type="project" value="TreeGrafter"/>
</dbReference>
<dbReference type="GO" id="GO:0008176">
    <property type="term" value="F:tRNA (guanine(46)-N7)-methyltransferase activity"/>
    <property type="evidence" value="ECO:0007669"/>
    <property type="project" value="UniProtKB-UniRule"/>
</dbReference>
<dbReference type="CDD" id="cd02440">
    <property type="entry name" value="AdoMet_MTases"/>
    <property type="match status" value="1"/>
</dbReference>
<dbReference type="Gene3D" id="3.40.50.150">
    <property type="entry name" value="Vaccinia Virus protein VP39"/>
    <property type="match status" value="1"/>
</dbReference>
<dbReference type="HAMAP" id="MF_01057">
    <property type="entry name" value="tRNA_methyltr_TrmB"/>
    <property type="match status" value="1"/>
</dbReference>
<dbReference type="InterPro" id="IPR029063">
    <property type="entry name" value="SAM-dependent_MTases_sf"/>
</dbReference>
<dbReference type="InterPro" id="IPR003358">
    <property type="entry name" value="tRNA_(Gua-N-7)_MeTrfase_Trmb"/>
</dbReference>
<dbReference type="InterPro" id="IPR055361">
    <property type="entry name" value="tRNA_methyltr_TrmB_bact"/>
</dbReference>
<dbReference type="NCBIfam" id="TIGR00091">
    <property type="entry name" value="tRNA (guanosine(46)-N7)-methyltransferase TrmB"/>
    <property type="match status" value="1"/>
</dbReference>
<dbReference type="PANTHER" id="PTHR23417">
    <property type="entry name" value="3-DEOXY-D-MANNO-OCTULOSONIC-ACID TRANSFERASE/TRNA GUANINE-N 7 - -METHYLTRANSFERASE"/>
    <property type="match status" value="1"/>
</dbReference>
<dbReference type="PANTHER" id="PTHR23417:SF14">
    <property type="entry name" value="PENTACOTRIPEPTIDE-REPEAT REGION OF PRORP DOMAIN-CONTAINING PROTEIN"/>
    <property type="match status" value="1"/>
</dbReference>
<dbReference type="Pfam" id="PF02390">
    <property type="entry name" value="Methyltransf_4"/>
    <property type="match status" value="1"/>
</dbReference>
<dbReference type="SUPFAM" id="SSF53335">
    <property type="entry name" value="S-adenosyl-L-methionine-dependent methyltransferases"/>
    <property type="match status" value="1"/>
</dbReference>
<dbReference type="PROSITE" id="PS51625">
    <property type="entry name" value="SAM_MT_TRMB"/>
    <property type="match status" value="1"/>
</dbReference>
<proteinExistence type="inferred from homology"/>
<organism>
    <name type="scientific">Chlamydia felis (strain Fe/C-56)</name>
    <name type="common">Chlamydophila felis</name>
    <dbReference type="NCBI Taxonomy" id="264202"/>
    <lineage>
        <taxon>Bacteria</taxon>
        <taxon>Pseudomonadati</taxon>
        <taxon>Chlamydiota</taxon>
        <taxon>Chlamydiia</taxon>
        <taxon>Chlamydiales</taxon>
        <taxon>Chlamydiaceae</taxon>
        <taxon>Chlamydia/Chlamydophila group</taxon>
        <taxon>Chlamydia</taxon>
    </lineage>
</organism>
<reference key="1">
    <citation type="journal article" date="2006" name="DNA Res.">
        <title>Genome sequence of the cat pathogen, Chlamydophila felis.</title>
        <authorList>
            <person name="Azuma Y."/>
            <person name="Hirakawa H."/>
            <person name="Yamashita A."/>
            <person name="Cai Y."/>
            <person name="Rahman M.A."/>
            <person name="Suzuki H."/>
            <person name="Mitaku S."/>
            <person name="Toh H."/>
            <person name="Goto S."/>
            <person name="Murakami T."/>
            <person name="Sugi K."/>
            <person name="Hayashi H."/>
            <person name="Fukushi H."/>
            <person name="Hattori M."/>
            <person name="Kuhara S."/>
            <person name="Shirai M."/>
        </authorList>
    </citation>
    <scope>NUCLEOTIDE SEQUENCE [LARGE SCALE GENOMIC DNA]</scope>
    <source>
        <strain>Fe/C-56</strain>
    </source>
</reference>
<protein>
    <recommendedName>
        <fullName evidence="2">tRNA (guanine-N(7)-)-methyltransferase</fullName>
        <ecNumber evidence="2">2.1.1.33</ecNumber>
    </recommendedName>
    <alternativeName>
        <fullName evidence="2">tRNA (guanine(46)-N(7))-methyltransferase</fullName>
    </alternativeName>
    <alternativeName>
        <fullName evidence="2">tRNA(m7G46)-methyltransferase</fullName>
    </alternativeName>
</protein>
<accession>Q255M7</accession>